<evidence type="ECO:0000255" key="1">
    <source>
        <dbReference type="HAMAP-Rule" id="MF_01832"/>
    </source>
</evidence>
<gene>
    <name evidence="1" type="primary">sufE</name>
    <name type="ordered locus">UTI89_C1871</name>
</gene>
<dbReference type="EMBL" id="CP000243">
    <property type="protein sequence ID" value="ABE07347.1"/>
    <property type="molecule type" value="Genomic_DNA"/>
</dbReference>
<dbReference type="RefSeq" id="WP_001196521.1">
    <property type="nucleotide sequence ID" value="NZ_CP064825.1"/>
</dbReference>
<dbReference type="SMR" id="Q1RBB7"/>
<dbReference type="KEGG" id="eci:UTI89_C1871"/>
<dbReference type="HOGENOM" id="CLU_124502_1_1_6"/>
<dbReference type="UniPathway" id="UPA00266"/>
<dbReference type="Proteomes" id="UP000001952">
    <property type="component" value="Chromosome"/>
</dbReference>
<dbReference type="GO" id="GO:0005737">
    <property type="term" value="C:cytoplasm"/>
    <property type="evidence" value="ECO:0007669"/>
    <property type="project" value="UniProtKB-SubCell"/>
</dbReference>
<dbReference type="GO" id="GO:0016226">
    <property type="term" value="P:iron-sulfur cluster assembly"/>
    <property type="evidence" value="ECO:0007669"/>
    <property type="project" value="InterPro"/>
</dbReference>
<dbReference type="GO" id="GO:0006790">
    <property type="term" value="P:sulfur compound metabolic process"/>
    <property type="evidence" value="ECO:0007669"/>
    <property type="project" value="InterPro"/>
</dbReference>
<dbReference type="FunFam" id="3.90.1010.10:FF:000004">
    <property type="entry name" value="Cysteine desulfuration protein SufE"/>
    <property type="match status" value="1"/>
</dbReference>
<dbReference type="Gene3D" id="3.90.1010.10">
    <property type="match status" value="1"/>
</dbReference>
<dbReference type="HAMAP" id="MF_01832">
    <property type="entry name" value="SufE"/>
    <property type="match status" value="1"/>
</dbReference>
<dbReference type="InterPro" id="IPR023939">
    <property type="entry name" value="Cysteine_desulfuration_SufE"/>
</dbReference>
<dbReference type="InterPro" id="IPR003808">
    <property type="entry name" value="Fe-S_metab-assoc_dom"/>
</dbReference>
<dbReference type="NCBIfam" id="NF006792">
    <property type="entry name" value="PRK09296.1"/>
    <property type="match status" value="1"/>
</dbReference>
<dbReference type="PANTHER" id="PTHR43597:SF3">
    <property type="entry name" value="CYSTEINE DESULFURATION PROTEIN SUFE"/>
    <property type="match status" value="1"/>
</dbReference>
<dbReference type="PANTHER" id="PTHR43597">
    <property type="entry name" value="SULFUR ACCEPTOR PROTEIN CSDE"/>
    <property type="match status" value="1"/>
</dbReference>
<dbReference type="Pfam" id="PF02657">
    <property type="entry name" value="SufE"/>
    <property type="match status" value="1"/>
</dbReference>
<dbReference type="SUPFAM" id="SSF82649">
    <property type="entry name" value="SufE/NifU"/>
    <property type="match status" value="1"/>
</dbReference>
<reference key="1">
    <citation type="journal article" date="2006" name="Proc. Natl. Acad. Sci. U.S.A.">
        <title>Identification of genes subject to positive selection in uropathogenic strains of Escherichia coli: a comparative genomics approach.</title>
        <authorList>
            <person name="Chen S.L."/>
            <person name="Hung C.-S."/>
            <person name="Xu J."/>
            <person name="Reigstad C.S."/>
            <person name="Magrini V."/>
            <person name="Sabo A."/>
            <person name="Blasiar D."/>
            <person name="Bieri T."/>
            <person name="Meyer R.R."/>
            <person name="Ozersky P."/>
            <person name="Armstrong J.R."/>
            <person name="Fulton R.S."/>
            <person name="Latreille J.P."/>
            <person name="Spieth J."/>
            <person name="Hooton T.M."/>
            <person name="Mardis E.R."/>
            <person name="Hultgren S.J."/>
            <person name="Gordon J.I."/>
        </authorList>
    </citation>
    <scope>NUCLEOTIDE SEQUENCE [LARGE SCALE GENOMIC DNA]</scope>
    <source>
        <strain>UTI89 / UPEC</strain>
    </source>
</reference>
<protein>
    <recommendedName>
        <fullName evidence="1">Cysteine desulfuration protein SufE</fullName>
    </recommendedName>
</protein>
<accession>Q1RBB7</accession>
<feature type="chain" id="PRO_1000070440" description="Cysteine desulfuration protein SufE">
    <location>
        <begin position="1"/>
        <end position="138"/>
    </location>
</feature>
<feature type="active site" description="Cysteine persulfide intermediate" evidence="1">
    <location>
        <position position="51"/>
    </location>
</feature>
<comment type="function">
    <text evidence="1">Participates in cysteine desulfuration mediated by SufS. Cysteine desulfuration mobilizes sulfur from L-cysteine to yield L-alanine and constitutes an essential step in sulfur metabolism for biosynthesis of a variety of sulfur-containing biomolecules. Functions as a sulfur acceptor for SufS, by mediating the direct transfer of the sulfur atom from the S-sulfanylcysteine of SufS, an intermediate product of cysteine desulfuration process.</text>
</comment>
<comment type="pathway">
    <text evidence="1">Cofactor biosynthesis; iron-sulfur cluster biosynthesis.</text>
</comment>
<comment type="subunit">
    <text evidence="1">Homodimer. Interacts with SufS.</text>
</comment>
<comment type="subcellular location">
    <subcellularLocation>
        <location evidence="1">Cytoplasm</location>
    </subcellularLocation>
</comment>
<comment type="similarity">
    <text evidence="1">Belongs to the SufE family.</text>
</comment>
<organism>
    <name type="scientific">Escherichia coli (strain UTI89 / UPEC)</name>
    <dbReference type="NCBI Taxonomy" id="364106"/>
    <lineage>
        <taxon>Bacteria</taxon>
        <taxon>Pseudomonadati</taxon>
        <taxon>Pseudomonadota</taxon>
        <taxon>Gammaproteobacteria</taxon>
        <taxon>Enterobacterales</taxon>
        <taxon>Enterobacteriaceae</taxon>
        <taxon>Escherichia</taxon>
    </lineage>
</organism>
<sequence length="138" mass="15781">MALLPDKEKLLRNFLRCANWEEKYLYIIELGQRLPELRDEDKSPQNSIQGCQSQVWIVMRQNAQGIIELHGDSDAAIVKGLIAVVFILYDQMTPQDIVNFDVRPWFEKMALTQHLTPSRSQGLEAMIRAIRAKAAALS</sequence>
<keyword id="KW-0963">Cytoplasm</keyword>
<name>SUFE_ECOUT</name>
<proteinExistence type="inferred from homology"/>